<comment type="function">
    <text evidence="1">DNA-dependent RNA polymerase catalyzes the transcription of DNA into RNA using the four ribonucleoside triphosphates as substrates.</text>
</comment>
<comment type="catalytic activity">
    <reaction evidence="1">
        <text>RNA(n) + a ribonucleoside 5'-triphosphate = RNA(n+1) + diphosphate</text>
        <dbReference type="Rhea" id="RHEA:21248"/>
        <dbReference type="Rhea" id="RHEA-COMP:14527"/>
        <dbReference type="Rhea" id="RHEA-COMP:17342"/>
        <dbReference type="ChEBI" id="CHEBI:33019"/>
        <dbReference type="ChEBI" id="CHEBI:61557"/>
        <dbReference type="ChEBI" id="CHEBI:140395"/>
        <dbReference type="EC" id="2.7.7.6"/>
    </reaction>
</comment>
<comment type="subunit">
    <text evidence="1">Homodimer. The RNAP catalytic core consists of 2 alpha, 1 beta, 1 beta' and 1 omega subunit. When a sigma factor is associated with the core the holoenzyme is formed, which can initiate transcription.</text>
</comment>
<comment type="domain">
    <text evidence="1">The N-terminal domain is essential for RNAP assembly and basal transcription, whereas the C-terminal domain is involved in interaction with transcriptional regulators and with upstream promoter elements.</text>
</comment>
<comment type="similarity">
    <text evidence="1">Belongs to the RNA polymerase alpha chain family.</text>
</comment>
<feature type="chain" id="PRO_1000057407" description="DNA-directed RNA polymerase subunit alpha">
    <location>
        <begin position="1"/>
        <end position="314"/>
    </location>
</feature>
<feature type="region of interest" description="Alpha N-terminal domain (alpha-NTD)" evidence="1">
    <location>
        <begin position="1"/>
        <end position="228"/>
    </location>
</feature>
<feature type="region of interest" description="Alpha C-terminal domain (alpha-CTD)" evidence="1">
    <location>
        <begin position="245"/>
        <end position="314"/>
    </location>
</feature>
<dbReference type="EC" id="2.7.7.6" evidence="1"/>
<dbReference type="EMBL" id="CP000705">
    <property type="protein sequence ID" value="ABQ83703.1"/>
    <property type="molecule type" value="Genomic_DNA"/>
</dbReference>
<dbReference type="RefSeq" id="WP_003664530.1">
    <property type="nucleotide sequence ID" value="NZ_AZDD01000010.1"/>
</dbReference>
<dbReference type="SMR" id="A5VLH9"/>
<dbReference type="STRING" id="557436.Lreu_1457"/>
<dbReference type="KEGG" id="lre:Lreu_1457"/>
<dbReference type="PATRIC" id="fig|557436.17.peg.166"/>
<dbReference type="eggNOG" id="COG0202">
    <property type="taxonomic scope" value="Bacteria"/>
</dbReference>
<dbReference type="HOGENOM" id="CLU_053084_0_1_9"/>
<dbReference type="Proteomes" id="UP000001991">
    <property type="component" value="Chromosome"/>
</dbReference>
<dbReference type="GO" id="GO:0005737">
    <property type="term" value="C:cytoplasm"/>
    <property type="evidence" value="ECO:0007669"/>
    <property type="project" value="UniProtKB-ARBA"/>
</dbReference>
<dbReference type="GO" id="GO:0000428">
    <property type="term" value="C:DNA-directed RNA polymerase complex"/>
    <property type="evidence" value="ECO:0007669"/>
    <property type="project" value="UniProtKB-KW"/>
</dbReference>
<dbReference type="GO" id="GO:0003677">
    <property type="term" value="F:DNA binding"/>
    <property type="evidence" value="ECO:0007669"/>
    <property type="project" value="UniProtKB-UniRule"/>
</dbReference>
<dbReference type="GO" id="GO:0003899">
    <property type="term" value="F:DNA-directed RNA polymerase activity"/>
    <property type="evidence" value="ECO:0007669"/>
    <property type="project" value="UniProtKB-UniRule"/>
</dbReference>
<dbReference type="GO" id="GO:0046983">
    <property type="term" value="F:protein dimerization activity"/>
    <property type="evidence" value="ECO:0007669"/>
    <property type="project" value="InterPro"/>
</dbReference>
<dbReference type="GO" id="GO:0006351">
    <property type="term" value="P:DNA-templated transcription"/>
    <property type="evidence" value="ECO:0007669"/>
    <property type="project" value="UniProtKB-UniRule"/>
</dbReference>
<dbReference type="CDD" id="cd06928">
    <property type="entry name" value="RNAP_alpha_NTD"/>
    <property type="match status" value="1"/>
</dbReference>
<dbReference type="FunFam" id="1.10.150.20:FF:000001">
    <property type="entry name" value="DNA-directed RNA polymerase subunit alpha"/>
    <property type="match status" value="1"/>
</dbReference>
<dbReference type="FunFam" id="2.170.120.12:FF:000001">
    <property type="entry name" value="DNA-directed RNA polymerase subunit alpha"/>
    <property type="match status" value="1"/>
</dbReference>
<dbReference type="Gene3D" id="1.10.150.20">
    <property type="entry name" value="5' to 3' exonuclease, C-terminal subdomain"/>
    <property type="match status" value="1"/>
</dbReference>
<dbReference type="Gene3D" id="2.170.120.12">
    <property type="entry name" value="DNA-directed RNA polymerase, insert domain"/>
    <property type="match status" value="1"/>
</dbReference>
<dbReference type="Gene3D" id="3.30.1360.10">
    <property type="entry name" value="RNA polymerase, RBP11-like subunit"/>
    <property type="match status" value="1"/>
</dbReference>
<dbReference type="HAMAP" id="MF_00059">
    <property type="entry name" value="RNApol_bact_RpoA"/>
    <property type="match status" value="1"/>
</dbReference>
<dbReference type="InterPro" id="IPR011262">
    <property type="entry name" value="DNA-dir_RNA_pol_insert"/>
</dbReference>
<dbReference type="InterPro" id="IPR011263">
    <property type="entry name" value="DNA-dir_RNA_pol_RpoA/D/Rpb3"/>
</dbReference>
<dbReference type="InterPro" id="IPR011773">
    <property type="entry name" value="DNA-dir_RpoA"/>
</dbReference>
<dbReference type="InterPro" id="IPR036603">
    <property type="entry name" value="RBP11-like"/>
</dbReference>
<dbReference type="InterPro" id="IPR011260">
    <property type="entry name" value="RNAP_asu_C"/>
</dbReference>
<dbReference type="InterPro" id="IPR036643">
    <property type="entry name" value="RNApol_insert_sf"/>
</dbReference>
<dbReference type="NCBIfam" id="NF003513">
    <property type="entry name" value="PRK05182.1-2"/>
    <property type="match status" value="1"/>
</dbReference>
<dbReference type="NCBIfam" id="NF003515">
    <property type="entry name" value="PRK05182.2-1"/>
    <property type="match status" value="1"/>
</dbReference>
<dbReference type="NCBIfam" id="NF003516">
    <property type="entry name" value="PRK05182.2-2"/>
    <property type="match status" value="1"/>
</dbReference>
<dbReference type="NCBIfam" id="NF003519">
    <property type="entry name" value="PRK05182.2-5"/>
    <property type="match status" value="1"/>
</dbReference>
<dbReference type="NCBIfam" id="TIGR02027">
    <property type="entry name" value="rpoA"/>
    <property type="match status" value="1"/>
</dbReference>
<dbReference type="Pfam" id="PF01000">
    <property type="entry name" value="RNA_pol_A_bac"/>
    <property type="match status" value="1"/>
</dbReference>
<dbReference type="Pfam" id="PF03118">
    <property type="entry name" value="RNA_pol_A_CTD"/>
    <property type="match status" value="1"/>
</dbReference>
<dbReference type="Pfam" id="PF01193">
    <property type="entry name" value="RNA_pol_L"/>
    <property type="match status" value="1"/>
</dbReference>
<dbReference type="SMART" id="SM00662">
    <property type="entry name" value="RPOLD"/>
    <property type="match status" value="1"/>
</dbReference>
<dbReference type="SUPFAM" id="SSF47789">
    <property type="entry name" value="C-terminal domain of RNA polymerase alpha subunit"/>
    <property type="match status" value="1"/>
</dbReference>
<dbReference type="SUPFAM" id="SSF56553">
    <property type="entry name" value="Insert subdomain of RNA polymerase alpha subunit"/>
    <property type="match status" value="1"/>
</dbReference>
<dbReference type="SUPFAM" id="SSF55257">
    <property type="entry name" value="RBP11-like subunits of RNA polymerase"/>
    <property type="match status" value="1"/>
</dbReference>
<reference key="1">
    <citation type="journal article" date="2011" name="PLoS Genet.">
        <title>The evolution of host specialization in the vertebrate gut symbiont Lactobacillus reuteri.</title>
        <authorList>
            <person name="Frese S.A."/>
            <person name="Benson A.K."/>
            <person name="Tannock G.W."/>
            <person name="Loach D.M."/>
            <person name="Kim J."/>
            <person name="Zhang M."/>
            <person name="Oh P.L."/>
            <person name="Heng N.C."/>
            <person name="Patil P.B."/>
            <person name="Juge N."/>
            <person name="Mackenzie D.A."/>
            <person name="Pearson B.M."/>
            <person name="Lapidus A."/>
            <person name="Dalin E."/>
            <person name="Tice H."/>
            <person name="Goltsman E."/>
            <person name="Land M."/>
            <person name="Hauser L."/>
            <person name="Ivanova N."/>
            <person name="Kyrpides N.C."/>
            <person name="Walter J."/>
        </authorList>
    </citation>
    <scope>NUCLEOTIDE SEQUENCE [LARGE SCALE GENOMIC DNA]</scope>
    <source>
        <strain>DSM 20016</strain>
    </source>
</reference>
<accession>A5VLH9</accession>
<organism>
    <name type="scientific">Limosilactobacillus reuteri (strain DSM 20016)</name>
    <name type="common">Lactobacillus reuteri</name>
    <dbReference type="NCBI Taxonomy" id="557436"/>
    <lineage>
        <taxon>Bacteria</taxon>
        <taxon>Bacillati</taxon>
        <taxon>Bacillota</taxon>
        <taxon>Bacilli</taxon>
        <taxon>Lactobacillales</taxon>
        <taxon>Lactobacillaceae</taxon>
        <taxon>Limosilactobacillus</taxon>
    </lineage>
</organism>
<keyword id="KW-0240">DNA-directed RNA polymerase</keyword>
<keyword id="KW-0548">Nucleotidyltransferase</keyword>
<keyword id="KW-1185">Reference proteome</keyword>
<keyword id="KW-0804">Transcription</keyword>
<keyword id="KW-0808">Transferase</keyword>
<protein>
    <recommendedName>
        <fullName evidence="1">DNA-directed RNA polymerase subunit alpha</fullName>
        <shortName evidence="1">RNAP subunit alpha</shortName>
        <ecNumber evidence="1">2.7.7.6</ecNumber>
    </recommendedName>
    <alternativeName>
        <fullName evidence="1">RNA polymerase subunit alpha</fullName>
    </alternativeName>
    <alternativeName>
        <fullName evidence="1">Transcriptase subunit alpha</fullName>
    </alternativeName>
</protein>
<name>RPOA_LIMRD</name>
<evidence type="ECO:0000255" key="1">
    <source>
        <dbReference type="HAMAP-Rule" id="MF_00059"/>
    </source>
</evidence>
<gene>
    <name evidence="1" type="primary">rpoA</name>
    <name type="ordered locus">Lreu_1457</name>
</gene>
<proteinExistence type="inferred from homology"/>
<sequence>MIEFEKPNIHKVEETDNYGKFVVEPLERGYGTTLGNSLRRVLIASLPGAAITSMQIDGVLHEFSTVEGVTEDVTQIILNLKKVSLKLDSEDQKNLELDVKGPAEVTASDIQGDNEVTILNPDLHIATVADGAELHIKLTADKGRGYLSANDNKARMDDLAIGVLPIDSIYTPIERVNYTVENARVGQRNDYDKLTLDVWTDGSLTPTEAVSLGAKILTEHLAMFVDLTETAQNAQVMVEKEETHKEKMLEMTIEELDLSVRSYNCLKRAGINTVKELTDRTVSDMMKVRNLGQKSLEEIKLKLNDLGVSFRQDD</sequence>